<comment type="function">
    <text evidence="1">Upstream regulator of interferon-induced serine/threonine protein kinase R (PKR). May block the PKR-inhibitory function of DNAJC3, resulting in restoration of kinase activity and suppression of cell growth.</text>
</comment>
<comment type="subunit">
    <text evidence="1">Interacts with DNAJC3, probably sequestring it.</text>
</comment>
<evidence type="ECO:0000250" key="1"/>
<evidence type="ECO:0000250" key="2">
    <source>
        <dbReference type="UniProtKB" id="O43422"/>
    </source>
</evidence>
<evidence type="ECO:0000255" key="3">
    <source>
        <dbReference type="PROSITE-ProRule" id="PRU00309"/>
    </source>
</evidence>
<evidence type="ECO:0000256" key="4">
    <source>
        <dbReference type="SAM" id="MobiDB-lite"/>
    </source>
</evidence>
<evidence type="ECO:0000312" key="5">
    <source>
        <dbReference type="MGI" id="MGI:1920231"/>
    </source>
</evidence>
<sequence>MPNFCAAPNCTRKSTQSDLAFFRFPRDPARCQKWVENCRRADLEDKTPDQLNKHYRLCAKHFETSMICRTSPYRTVLRDNAIPTIFDLTSHLNNPHSRHRKRIKELSEDEIRTLKQKKIEETSEQEQETNTNAQNPSAEAVNQQDANVLPLTLEEKENKEYLKSLFEILVLMGKQNIPLDGHEADEVPEGLFAPDNFQALLECRINSGEEVLRKRFEATAVNTLFCSKTQQRHMLEICESCIREETLREVRDSHFFSIITDDVVDIAGEEHLPVLVRFVDDAHNLREEFVGFLPYEADAEILAVKFHTTITEKWGLNMEYCRGQAYIVSSGFSSKMKVVASRLLEKYPQAVYTLCSSCALNAWLAKSVPVIGVSVALGTIEEVCSFFHRSPQLLLELDSVISVLFQNSEERAKELKEICHSQWTGRHDAFEILVDLLQALVLCLDGIINSDTNVRWNNYIAGRAFVLCSAVTDFDFIVTIVVLKNVLSFTRAFGKNLQGQTSDVFFAASSLTAVLHSLNEVMENIEVYHEFWFEEATNLATKLDIQMKLPGKFRRAQQGNLESQLTSESYYKDTLSVPTVEHIIQELKDIFSEQHLKALKCLSLVPSVMGQLKFNTSEEHHADMYRSDLPNPDTLSAELHCWRIKWKHRGKDIELPSTIYEALHLPDIKFFPNVYALLKVLCILPVMKVENERYENGRKRLKAYLRNTLTDQRSSNLALLNINFDIKHDLDLMVDTYIKLYTNKSELPTINSETIENT</sequence>
<proteinExistence type="evidence at transcript level"/>
<accession>Q9CUX1</accession>
<accession>Q80Y58</accession>
<reference key="1">
    <citation type="journal article" date="2004" name="Genome Res.">
        <title>The status, quality, and expansion of the NIH full-length cDNA project: the Mammalian Gene Collection (MGC).</title>
        <authorList>
            <consortium name="The MGC Project Team"/>
        </authorList>
    </citation>
    <scope>NUCLEOTIDE SEQUENCE [LARGE SCALE MRNA]</scope>
    <source>
        <strain>C57BL/6J</strain>
        <tissue>Brain</tissue>
    </source>
</reference>
<reference key="2">
    <citation type="journal article" date="2005" name="Science">
        <title>The transcriptional landscape of the mammalian genome.</title>
        <authorList>
            <person name="Carninci P."/>
            <person name="Kasukawa T."/>
            <person name="Katayama S."/>
            <person name="Gough J."/>
            <person name="Frith M.C."/>
            <person name="Maeda N."/>
            <person name="Oyama R."/>
            <person name="Ravasi T."/>
            <person name="Lenhard B."/>
            <person name="Wells C."/>
            <person name="Kodzius R."/>
            <person name="Shimokawa K."/>
            <person name="Bajic V.B."/>
            <person name="Brenner S.E."/>
            <person name="Batalov S."/>
            <person name="Forrest A.R."/>
            <person name="Zavolan M."/>
            <person name="Davis M.J."/>
            <person name="Wilming L.G."/>
            <person name="Aidinis V."/>
            <person name="Allen J.E."/>
            <person name="Ambesi-Impiombato A."/>
            <person name="Apweiler R."/>
            <person name="Aturaliya R.N."/>
            <person name="Bailey T.L."/>
            <person name="Bansal M."/>
            <person name="Baxter L."/>
            <person name="Beisel K.W."/>
            <person name="Bersano T."/>
            <person name="Bono H."/>
            <person name="Chalk A.M."/>
            <person name="Chiu K.P."/>
            <person name="Choudhary V."/>
            <person name="Christoffels A."/>
            <person name="Clutterbuck D.R."/>
            <person name="Crowe M.L."/>
            <person name="Dalla E."/>
            <person name="Dalrymple B.P."/>
            <person name="de Bono B."/>
            <person name="Della Gatta G."/>
            <person name="di Bernardo D."/>
            <person name="Down T."/>
            <person name="Engstrom P."/>
            <person name="Fagiolini M."/>
            <person name="Faulkner G."/>
            <person name="Fletcher C.F."/>
            <person name="Fukushima T."/>
            <person name="Furuno M."/>
            <person name="Futaki S."/>
            <person name="Gariboldi M."/>
            <person name="Georgii-Hemming P."/>
            <person name="Gingeras T.R."/>
            <person name="Gojobori T."/>
            <person name="Green R.E."/>
            <person name="Gustincich S."/>
            <person name="Harbers M."/>
            <person name="Hayashi Y."/>
            <person name="Hensch T.K."/>
            <person name="Hirokawa N."/>
            <person name="Hill D."/>
            <person name="Huminiecki L."/>
            <person name="Iacono M."/>
            <person name="Ikeo K."/>
            <person name="Iwama A."/>
            <person name="Ishikawa T."/>
            <person name="Jakt M."/>
            <person name="Kanapin A."/>
            <person name="Katoh M."/>
            <person name="Kawasawa Y."/>
            <person name="Kelso J."/>
            <person name="Kitamura H."/>
            <person name="Kitano H."/>
            <person name="Kollias G."/>
            <person name="Krishnan S.P."/>
            <person name="Kruger A."/>
            <person name="Kummerfeld S.K."/>
            <person name="Kurochkin I.V."/>
            <person name="Lareau L.F."/>
            <person name="Lazarevic D."/>
            <person name="Lipovich L."/>
            <person name="Liu J."/>
            <person name="Liuni S."/>
            <person name="McWilliam S."/>
            <person name="Madan Babu M."/>
            <person name="Madera M."/>
            <person name="Marchionni L."/>
            <person name="Matsuda H."/>
            <person name="Matsuzawa S."/>
            <person name="Miki H."/>
            <person name="Mignone F."/>
            <person name="Miyake S."/>
            <person name="Morris K."/>
            <person name="Mottagui-Tabar S."/>
            <person name="Mulder N."/>
            <person name="Nakano N."/>
            <person name="Nakauchi H."/>
            <person name="Ng P."/>
            <person name="Nilsson R."/>
            <person name="Nishiguchi S."/>
            <person name="Nishikawa S."/>
            <person name="Nori F."/>
            <person name="Ohara O."/>
            <person name="Okazaki Y."/>
            <person name="Orlando V."/>
            <person name="Pang K.C."/>
            <person name="Pavan W.J."/>
            <person name="Pavesi G."/>
            <person name="Pesole G."/>
            <person name="Petrovsky N."/>
            <person name="Piazza S."/>
            <person name="Reed J."/>
            <person name="Reid J.F."/>
            <person name="Ring B.Z."/>
            <person name="Ringwald M."/>
            <person name="Rost B."/>
            <person name="Ruan Y."/>
            <person name="Salzberg S.L."/>
            <person name="Sandelin A."/>
            <person name="Schneider C."/>
            <person name="Schoenbach C."/>
            <person name="Sekiguchi K."/>
            <person name="Semple C.A."/>
            <person name="Seno S."/>
            <person name="Sessa L."/>
            <person name="Sheng Y."/>
            <person name="Shibata Y."/>
            <person name="Shimada H."/>
            <person name="Shimada K."/>
            <person name="Silva D."/>
            <person name="Sinclair B."/>
            <person name="Sperling S."/>
            <person name="Stupka E."/>
            <person name="Sugiura K."/>
            <person name="Sultana R."/>
            <person name="Takenaka Y."/>
            <person name="Taki K."/>
            <person name="Tammoja K."/>
            <person name="Tan S.L."/>
            <person name="Tang S."/>
            <person name="Taylor M.S."/>
            <person name="Tegner J."/>
            <person name="Teichmann S.A."/>
            <person name="Ueda H.R."/>
            <person name="van Nimwegen E."/>
            <person name="Verardo R."/>
            <person name="Wei C.L."/>
            <person name="Yagi K."/>
            <person name="Yamanishi H."/>
            <person name="Zabarovsky E."/>
            <person name="Zhu S."/>
            <person name="Zimmer A."/>
            <person name="Hide W."/>
            <person name="Bult C."/>
            <person name="Grimmond S.M."/>
            <person name="Teasdale R.D."/>
            <person name="Liu E.T."/>
            <person name="Brusic V."/>
            <person name="Quackenbush J."/>
            <person name="Wahlestedt C."/>
            <person name="Mattick J.S."/>
            <person name="Hume D.A."/>
            <person name="Kai C."/>
            <person name="Sasaki D."/>
            <person name="Tomaru Y."/>
            <person name="Fukuda S."/>
            <person name="Kanamori-Katayama M."/>
            <person name="Suzuki M."/>
            <person name="Aoki J."/>
            <person name="Arakawa T."/>
            <person name="Iida J."/>
            <person name="Imamura K."/>
            <person name="Itoh M."/>
            <person name="Kato T."/>
            <person name="Kawaji H."/>
            <person name="Kawagashira N."/>
            <person name="Kawashima T."/>
            <person name="Kojima M."/>
            <person name="Kondo S."/>
            <person name="Konno H."/>
            <person name="Nakano K."/>
            <person name="Ninomiya N."/>
            <person name="Nishio T."/>
            <person name="Okada M."/>
            <person name="Plessy C."/>
            <person name="Shibata K."/>
            <person name="Shiraki T."/>
            <person name="Suzuki S."/>
            <person name="Tagami M."/>
            <person name="Waki K."/>
            <person name="Watahiki A."/>
            <person name="Okamura-Oho Y."/>
            <person name="Suzuki H."/>
            <person name="Kawai J."/>
            <person name="Hayashizaki Y."/>
        </authorList>
    </citation>
    <scope>NUCLEOTIDE SEQUENCE [LARGE SCALE MRNA] OF 1-652</scope>
    <source>
        <strain>C57BL/6J</strain>
        <tissue>Hippocampus</tissue>
    </source>
</reference>
<name>P52K_MOUSE</name>
<keyword id="KW-0238">DNA-binding</keyword>
<keyword id="KW-0479">Metal-binding</keyword>
<keyword id="KW-0597">Phosphoprotein</keyword>
<keyword id="KW-1185">Reference proteome</keyword>
<keyword id="KW-0862">Zinc</keyword>
<keyword id="KW-0863">Zinc-finger</keyword>
<protein>
    <recommendedName>
        <fullName>52 kDa repressor of the inhibitor of the protein kinase</fullName>
        <shortName>p52rIPK</shortName>
    </recommendedName>
    <alternativeName>
        <fullName>58 kDa interferon-induced protein kinase-interacting protein</fullName>
        <shortName>p58IPK-interacting protein</shortName>
    </alternativeName>
    <alternativeName>
        <fullName>THAP domain-containing protein 0</fullName>
    </alternativeName>
    <alternativeName>
        <fullName evidence="2">THAP domain-containing protein 12</fullName>
    </alternativeName>
</protein>
<organism>
    <name type="scientific">Mus musculus</name>
    <name type="common">Mouse</name>
    <dbReference type="NCBI Taxonomy" id="10090"/>
    <lineage>
        <taxon>Eukaryota</taxon>
        <taxon>Metazoa</taxon>
        <taxon>Chordata</taxon>
        <taxon>Craniata</taxon>
        <taxon>Vertebrata</taxon>
        <taxon>Euteleostomi</taxon>
        <taxon>Mammalia</taxon>
        <taxon>Eutheria</taxon>
        <taxon>Euarchontoglires</taxon>
        <taxon>Glires</taxon>
        <taxon>Rodentia</taxon>
        <taxon>Myomorpha</taxon>
        <taxon>Muroidea</taxon>
        <taxon>Muridae</taxon>
        <taxon>Murinae</taxon>
        <taxon>Mus</taxon>
        <taxon>Mus</taxon>
    </lineage>
</organism>
<gene>
    <name evidence="2" type="primary">Thap12</name>
    <name evidence="5" type="synonym">Prkrir</name>
    <name type="synonym">Thap0</name>
</gene>
<dbReference type="EMBL" id="BC049103">
    <property type="protein sequence ID" value="AAH49103.1"/>
    <property type="molecule type" value="mRNA"/>
</dbReference>
<dbReference type="EMBL" id="AK013663">
    <property type="protein sequence ID" value="BAB28945.1"/>
    <property type="molecule type" value="mRNA"/>
</dbReference>
<dbReference type="CCDS" id="CCDS21474.1"/>
<dbReference type="RefSeq" id="NP_082686.1">
    <property type="nucleotide sequence ID" value="NM_028410.2"/>
</dbReference>
<dbReference type="RefSeq" id="XP_011240217.1">
    <property type="nucleotide sequence ID" value="XM_011241915.4"/>
</dbReference>
<dbReference type="SMR" id="Q9CUX1"/>
<dbReference type="BioGRID" id="215689">
    <property type="interactions" value="3"/>
</dbReference>
<dbReference type="FunCoup" id="Q9CUX1">
    <property type="interactions" value="3323"/>
</dbReference>
<dbReference type="STRING" id="10090.ENSMUSP00000033009"/>
<dbReference type="iPTMnet" id="Q9CUX1"/>
<dbReference type="PhosphoSitePlus" id="Q9CUX1"/>
<dbReference type="PaxDb" id="10090-ENSMUSP00000033009"/>
<dbReference type="PeptideAtlas" id="Q9CUX1"/>
<dbReference type="ProteomicsDB" id="287754"/>
<dbReference type="Pumba" id="Q9CUX1"/>
<dbReference type="Antibodypedia" id="2160">
    <property type="antibodies" value="161 antibodies from 22 providers"/>
</dbReference>
<dbReference type="DNASU" id="72981"/>
<dbReference type="Ensembl" id="ENSMUST00000033009.16">
    <property type="protein sequence ID" value="ENSMUSP00000033009.10"/>
    <property type="gene ID" value="ENSMUSG00000030753.16"/>
</dbReference>
<dbReference type="GeneID" id="72981"/>
<dbReference type="KEGG" id="mmu:72981"/>
<dbReference type="UCSC" id="uc009ikt.1">
    <property type="organism name" value="mouse"/>
</dbReference>
<dbReference type="AGR" id="MGI:1920231"/>
<dbReference type="CTD" id="5612"/>
<dbReference type="MGI" id="MGI:1920231">
    <property type="gene designation" value="Thap12"/>
</dbReference>
<dbReference type="VEuPathDB" id="HostDB:ENSMUSG00000030753"/>
<dbReference type="eggNOG" id="ENOG502QU3U">
    <property type="taxonomic scope" value="Eukaryota"/>
</dbReference>
<dbReference type="GeneTree" id="ENSGT00530000063516"/>
<dbReference type="HOGENOM" id="CLU_023409_0_0_1"/>
<dbReference type="InParanoid" id="Q9CUX1"/>
<dbReference type="OMA" id="YCSKAQQ"/>
<dbReference type="OrthoDB" id="7683421at2759"/>
<dbReference type="PhylomeDB" id="Q9CUX1"/>
<dbReference type="TreeFam" id="TF330114"/>
<dbReference type="BioGRID-ORCS" id="72981">
    <property type="hits" value="29 hits in 81 CRISPR screens"/>
</dbReference>
<dbReference type="ChiTaRS" id="Prkrir">
    <property type="organism name" value="mouse"/>
</dbReference>
<dbReference type="PRO" id="PR:Q9CUX1"/>
<dbReference type="Proteomes" id="UP000000589">
    <property type="component" value="Chromosome 7"/>
</dbReference>
<dbReference type="RNAct" id="Q9CUX1">
    <property type="molecule type" value="protein"/>
</dbReference>
<dbReference type="Bgee" id="ENSMUSG00000030753">
    <property type="expression patterns" value="Expressed in triceps brachii and 267 other cell types or tissues"/>
</dbReference>
<dbReference type="ExpressionAtlas" id="Q9CUX1">
    <property type="expression patterns" value="baseline and differential"/>
</dbReference>
<dbReference type="GO" id="GO:0005634">
    <property type="term" value="C:nucleus"/>
    <property type="evidence" value="ECO:0000314"/>
    <property type="project" value="MGI"/>
</dbReference>
<dbReference type="GO" id="GO:0003677">
    <property type="term" value="F:DNA binding"/>
    <property type="evidence" value="ECO:0007669"/>
    <property type="project" value="UniProtKB-KW"/>
</dbReference>
<dbReference type="GO" id="GO:0046983">
    <property type="term" value="F:protein dimerization activity"/>
    <property type="evidence" value="ECO:0007669"/>
    <property type="project" value="InterPro"/>
</dbReference>
<dbReference type="GO" id="GO:0008270">
    <property type="term" value="F:zinc ion binding"/>
    <property type="evidence" value="ECO:0007669"/>
    <property type="project" value="UniProtKB-KW"/>
</dbReference>
<dbReference type="InterPro" id="IPR025398">
    <property type="entry name" value="DUF4371"/>
</dbReference>
<dbReference type="InterPro" id="IPR008906">
    <property type="entry name" value="HATC_C_dom"/>
</dbReference>
<dbReference type="InterPro" id="IPR052958">
    <property type="entry name" value="IFN-induced_PKR_regulator"/>
</dbReference>
<dbReference type="InterPro" id="IPR012337">
    <property type="entry name" value="RNaseH-like_sf"/>
</dbReference>
<dbReference type="InterPro" id="IPR006612">
    <property type="entry name" value="THAP_Znf"/>
</dbReference>
<dbReference type="PANTHER" id="PTHR46289:SF16">
    <property type="entry name" value="52 KDA REPRESSOR OF THE INHIBITOR OF THE PROTEIN KINASE"/>
    <property type="match status" value="1"/>
</dbReference>
<dbReference type="PANTHER" id="PTHR46289">
    <property type="entry name" value="52 KDA REPRESSOR OF THE INHIBITOR OF THE PROTEIN KINASE-LIKE PROTEIN-RELATED"/>
    <property type="match status" value="1"/>
</dbReference>
<dbReference type="Pfam" id="PF05699">
    <property type="entry name" value="Dimer_Tnp_hAT"/>
    <property type="match status" value="1"/>
</dbReference>
<dbReference type="Pfam" id="PF14291">
    <property type="entry name" value="DUF4371"/>
    <property type="match status" value="1"/>
</dbReference>
<dbReference type="Pfam" id="PF05485">
    <property type="entry name" value="THAP"/>
    <property type="match status" value="1"/>
</dbReference>
<dbReference type="SMART" id="SM00692">
    <property type="entry name" value="DM3"/>
    <property type="match status" value="1"/>
</dbReference>
<dbReference type="SMART" id="SM00980">
    <property type="entry name" value="THAP"/>
    <property type="match status" value="1"/>
</dbReference>
<dbReference type="SUPFAM" id="SSF57716">
    <property type="entry name" value="Glucocorticoid receptor-like (DNA-binding domain)"/>
    <property type="match status" value="1"/>
</dbReference>
<dbReference type="SUPFAM" id="SSF53098">
    <property type="entry name" value="Ribonuclease H-like"/>
    <property type="match status" value="1"/>
</dbReference>
<dbReference type="PROSITE" id="PS50950">
    <property type="entry name" value="ZF_THAP"/>
    <property type="match status" value="1"/>
</dbReference>
<feature type="chain" id="PRO_0000068635" description="52 kDa repressor of the inhibitor of the protein kinase">
    <location>
        <begin position="1"/>
        <end position="758"/>
    </location>
</feature>
<feature type="zinc finger region" description="THAP-type" evidence="3">
    <location>
        <begin position="1"/>
        <end position="86"/>
    </location>
</feature>
<feature type="region of interest" description="Disordered" evidence="4">
    <location>
        <begin position="116"/>
        <end position="141"/>
    </location>
</feature>
<feature type="modified residue" description="Phosphoserine" evidence="2">
    <location>
        <position position="563"/>
    </location>
</feature>